<name>SUCC_YERPY</name>
<dbReference type="EC" id="6.2.1.5" evidence="1"/>
<dbReference type="EMBL" id="CP000950">
    <property type="protein sequence ID" value="ACA69240.1"/>
    <property type="molecule type" value="Genomic_DNA"/>
</dbReference>
<dbReference type="RefSeq" id="WP_002210728.1">
    <property type="nucleotide sequence ID" value="NZ_CP009792.1"/>
</dbReference>
<dbReference type="SMR" id="B1JG57"/>
<dbReference type="GeneID" id="57977251"/>
<dbReference type="KEGG" id="ypy:YPK_2966"/>
<dbReference type="PATRIC" id="fig|502800.11.peg.3687"/>
<dbReference type="UniPathway" id="UPA00223">
    <property type="reaction ID" value="UER00999"/>
</dbReference>
<dbReference type="GO" id="GO:0005829">
    <property type="term" value="C:cytosol"/>
    <property type="evidence" value="ECO:0007669"/>
    <property type="project" value="TreeGrafter"/>
</dbReference>
<dbReference type="GO" id="GO:0042709">
    <property type="term" value="C:succinate-CoA ligase complex"/>
    <property type="evidence" value="ECO:0007669"/>
    <property type="project" value="TreeGrafter"/>
</dbReference>
<dbReference type="GO" id="GO:0005524">
    <property type="term" value="F:ATP binding"/>
    <property type="evidence" value="ECO:0007669"/>
    <property type="project" value="UniProtKB-UniRule"/>
</dbReference>
<dbReference type="GO" id="GO:0000287">
    <property type="term" value="F:magnesium ion binding"/>
    <property type="evidence" value="ECO:0007669"/>
    <property type="project" value="UniProtKB-UniRule"/>
</dbReference>
<dbReference type="GO" id="GO:0004775">
    <property type="term" value="F:succinate-CoA ligase (ADP-forming) activity"/>
    <property type="evidence" value="ECO:0007669"/>
    <property type="project" value="UniProtKB-UniRule"/>
</dbReference>
<dbReference type="GO" id="GO:0004776">
    <property type="term" value="F:succinate-CoA ligase (GDP-forming) activity"/>
    <property type="evidence" value="ECO:0007669"/>
    <property type="project" value="RHEA"/>
</dbReference>
<dbReference type="GO" id="GO:0006104">
    <property type="term" value="P:succinyl-CoA metabolic process"/>
    <property type="evidence" value="ECO:0007669"/>
    <property type="project" value="TreeGrafter"/>
</dbReference>
<dbReference type="GO" id="GO:0006099">
    <property type="term" value="P:tricarboxylic acid cycle"/>
    <property type="evidence" value="ECO:0007669"/>
    <property type="project" value="UniProtKB-UniRule"/>
</dbReference>
<dbReference type="FunFam" id="3.30.1490.20:FF:000002">
    <property type="entry name" value="Succinate--CoA ligase [ADP-forming] subunit beta"/>
    <property type="match status" value="1"/>
</dbReference>
<dbReference type="FunFam" id="3.30.470.20:FF:000002">
    <property type="entry name" value="Succinate--CoA ligase [ADP-forming] subunit beta"/>
    <property type="match status" value="1"/>
</dbReference>
<dbReference type="FunFam" id="3.40.50.261:FF:000001">
    <property type="entry name" value="Succinate--CoA ligase [ADP-forming] subunit beta"/>
    <property type="match status" value="1"/>
</dbReference>
<dbReference type="Gene3D" id="3.30.1490.20">
    <property type="entry name" value="ATP-grasp fold, A domain"/>
    <property type="match status" value="1"/>
</dbReference>
<dbReference type="Gene3D" id="3.30.470.20">
    <property type="entry name" value="ATP-grasp fold, B domain"/>
    <property type="match status" value="1"/>
</dbReference>
<dbReference type="Gene3D" id="3.40.50.261">
    <property type="entry name" value="Succinyl-CoA synthetase domains"/>
    <property type="match status" value="1"/>
</dbReference>
<dbReference type="HAMAP" id="MF_00558">
    <property type="entry name" value="Succ_CoA_beta"/>
    <property type="match status" value="1"/>
</dbReference>
<dbReference type="InterPro" id="IPR011761">
    <property type="entry name" value="ATP-grasp"/>
</dbReference>
<dbReference type="InterPro" id="IPR013650">
    <property type="entry name" value="ATP-grasp_succ-CoA_synth-type"/>
</dbReference>
<dbReference type="InterPro" id="IPR013815">
    <property type="entry name" value="ATP_grasp_subdomain_1"/>
</dbReference>
<dbReference type="InterPro" id="IPR017866">
    <property type="entry name" value="Succ-CoA_synthase_bsu_CS"/>
</dbReference>
<dbReference type="InterPro" id="IPR005811">
    <property type="entry name" value="SUCC_ACL_C"/>
</dbReference>
<dbReference type="InterPro" id="IPR005809">
    <property type="entry name" value="Succ_CoA_ligase-like_bsu"/>
</dbReference>
<dbReference type="InterPro" id="IPR016102">
    <property type="entry name" value="Succinyl-CoA_synth-like"/>
</dbReference>
<dbReference type="NCBIfam" id="NF001913">
    <property type="entry name" value="PRK00696.1"/>
    <property type="match status" value="1"/>
</dbReference>
<dbReference type="NCBIfam" id="TIGR01016">
    <property type="entry name" value="sucCoAbeta"/>
    <property type="match status" value="1"/>
</dbReference>
<dbReference type="PANTHER" id="PTHR11815:SF10">
    <property type="entry name" value="SUCCINATE--COA LIGASE [GDP-FORMING] SUBUNIT BETA, MITOCHONDRIAL"/>
    <property type="match status" value="1"/>
</dbReference>
<dbReference type="PANTHER" id="PTHR11815">
    <property type="entry name" value="SUCCINYL-COA SYNTHETASE BETA CHAIN"/>
    <property type="match status" value="1"/>
</dbReference>
<dbReference type="Pfam" id="PF08442">
    <property type="entry name" value="ATP-grasp_2"/>
    <property type="match status" value="1"/>
</dbReference>
<dbReference type="Pfam" id="PF00549">
    <property type="entry name" value="Ligase_CoA"/>
    <property type="match status" value="1"/>
</dbReference>
<dbReference type="PIRSF" id="PIRSF001554">
    <property type="entry name" value="SucCS_beta"/>
    <property type="match status" value="1"/>
</dbReference>
<dbReference type="SUPFAM" id="SSF56059">
    <property type="entry name" value="Glutathione synthetase ATP-binding domain-like"/>
    <property type="match status" value="1"/>
</dbReference>
<dbReference type="SUPFAM" id="SSF52210">
    <property type="entry name" value="Succinyl-CoA synthetase domains"/>
    <property type="match status" value="1"/>
</dbReference>
<dbReference type="PROSITE" id="PS50975">
    <property type="entry name" value="ATP_GRASP"/>
    <property type="match status" value="1"/>
</dbReference>
<dbReference type="PROSITE" id="PS01217">
    <property type="entry name" value="SUCCINYL_COA_LIG_3"/>
    <property type="match status" value="1"/>
</dbReference>
<gene>
    <name evidence="1" type="primary">sucC</name>
    <name type="ordered locus">YPK_2966</name>
</gene>
<accession>B1JG57</accession>
<feature type="chain" id="PRO_1000129244" description="Succinate--CoA ligase [ADP-forming] subunit beta">
    <location>
        <begin position="1"/>
        <end position="388"/>
    </location>
</feature>
<feature type="domain" description="ATP-grasp" evidence="1">
    <location>
        <begin position="9"/>
        <end position="244"/>
    </location>
</feature>
<feature type="binding site" evidence="1">
    <location>
        <position position="46"/>
    </location>
    <ligand>
        <name>ATP</name>
        <dbReference type="ChEBI" id="CHEBI:30616"/>
    </ligand>
</feature>
<feature type="binding site" evidence="1">
    <location>
        <begin position="53"/>
        <end position="55"/>
    </location>
    <ligand>
        <name>ATP</name>
        <dbReference type="ChEBI" id="CHEBI:30616"/>
    </ligand>
</feature>
<feature type="binding site" evidence="1">
    <location>
        <position position="99"/>
    </location>
    <ligand>
        <name>ATP</name>
        <dbReference type="ChEBI" id="CHEBI:30616"/>
    </ligand>
</feature>
<feature type="binding site" evidence="1">
    <location>
        <position position="102"/>
    </location>
    <ligand>
        <name>ATP</name>
        <dbReference type="ChEBI" id="CHEBI:30616"/>
    </ligand>
</feature>
<feature type="binding site" evidence="1">
    <location>
        <position position="107"/>
    </location>
    <ligand>
        <name>ATP</name>
        <dbReference type="ChEBI" id="CHEBI:30616"/>
    </ligand>
</feature>
<feature type="binding site" evidence="1">
    <location>
        <position position="199"/>
    </location>
    <ligand>
        <name>Mg(2+)</name>
        <dbReference type="ChEBI" id="CHEBI:18420"/>
    </ligand>
</feature>
<feature type="binding site" evidence="1">
    <location>
        <position position="213"/>
    </location>
    <ligand>
        <name>Mg(2+)</name>
        <dbReference type="ChEBI" id="CHEBI:18420"/>
    </ligand>
</feature>
<feature type="binding site" evidence="1">
    <location>
        <position position="264"/>
    </location>
    <ligand>
        <name>substrate</name>
        <note>ligand shared with subunit alpha</note>
    </ligand>
</feature>
<feature type="binding site" evidence="1">
    <location>
        <begin position="321"/>
        <end position="323"/>
    </location>
    <ligand>
        <name>substrate</name>
        <note>ligand shared with subunit alpha</note>
    </ligand>
</feature>
<proteinExistence type="inferred from homology"/>
<evidence type="ECO:0000255" key="1">
    <source>
        <dbReference type="HAMAP-Rule" id="MF_00558"/>
    </source>
</evidence>
<comment type="function">
    <text evidence="1">Succinyl-CoA synthetase functions in the citric acid cycle (TCA), coupling the hydrolysis of succinyl-CoA to the synthesis of either ATP or GTP and thus represents the only step of substrate-level phosphorylation in the TCA. The beta subunit provides nucleotide specificity of the enzyme and binds the substrate succinate, while the binding sites for coenzyme A and phosphate are found in the alpha subunit.</text>
</comment>
<comment type="catalytic activity">
    <reaction evidence="1">
        <text>succinate + ATP + CoA = succinyl-CoA + ADP + phosphate</text>
        <dbReference type="Rhea" id="RHEA:17661"/>
        <dbReference type="ChEBI" id="CHEBI:30031"/>
        <dbReference type="ChEBI" id="CHEBI:30616"/>
        <dbReference type="ChEBI" id="CHEBI:43474"/>
        <dbReference type="ChEBI" id="CHEBI:57287"/>
        <dbReference type="ChEBI" id="CHEBI:57292"/>
        <dbReference type="ChEBI" id="CHEBI:456216"/>
        <dbReference type="EC" id="6.2.1.5"/>
    </reaction>
    <physiologicalReaction direction="right-to-left" evidence="1">
        <dbReference type="Rhea" id="RHEA:17663"/>
    </physiologicalReaction>
</comment>
<comment type="catalytic activity">
    <reaction evidence="1">
        <text>GTP + succinate + CoA = succinyl-CoA + GDP + phosphate</text>
        <dbReference type="Rhea" id="RHEA:22120"/>
        <dbReference type="ChEBI" id="CHEBI:30031"/>
        <dbReference type="ChEBI" id="CHEBI:37565"/>
        <dbReference type="ChEBI" id="CHEBI:43474"/>
        <dbReference type="ChEBI" id="CHEBI:57287"/>
        <dbReference type="ChEBI" id="CHEBI:57292"/>
        <dbReference type="ChEBI" id="CHEBI:58189"/>
    </reaction>
    <physiologicalReaction direction="right-to-left" evidence="1">
        <dbReference type="Rhea" id="RHEA:22122"/>
    </physiologicalReaction>
</comment>
<comment type="cofactor">
    <cofactor evidence="1">
        <name>Mg(2+)</name>
        <dbReference type="ChEBI" id="CHEBI:18420"/>
    </cofactor>
    <text evidence="1">Binds 1 Mg(2+) ion per subunit.</text>
</comment>
<comment type="pathway">
    <text evidence="1">Carbohydrate metabolism; tricarboxylic acid cycle; succinate from succinyl-CoA (ligase route): step 1/1.</text>
</comment>
<comment type="subunit">
    <text evidence="1">Heterotetramer of two alpha and two beta subunits.</text>
</comment>
<comment type="similarity">
    <text evidence="1">Belongs to the succinate/malate CoA ligase beta subunit family.</text>
</comment>
<sequence>MNLHEYQAKQLFARYGMPAPTGYACTTPREAEEAASKIGAGPWVVKCQVHAGGRGKAGGVKLVNSKEDIRAFAEQWLGKKLVTYQTDANGQPVHQILVEAATDIDKELYLGAVIDRSSRRVVFMASTEGGVEIEKVAEETPELIHKIALDPLTGPQPYQGRELAFKLGLTGKQVGQFTKIFMGLATLFLERDLAMVEINPLVVTKQGDLICLDGKLGADGNALFRQPELREMRDPSQEDAREAHAAQWELNYVALDGNIGCMVNGAGLAMGTMDIVKLHGGEPANFLDVGGGATKERVTEAFKIILSDDKVKAVFVNIFGGIVRCDLIADGIIGAVEEVGVNVPVVVRLEGNNAELGAKKLADSGLNIIAATSLTDAAQQVVAAVGAK</sequence>
<protein>
    <recommendedName>
        <fullName evidence="1">Succinate--CoA ligase [ADP-forming] subunit beta</fullName>
        <ecNumber evidence="1">6.2.1.5</ecNumber>
    </recommendedName>
    <alternativeName>
        <fullName evidence="1">Succinyl-CoA synthetase subunit beta</fullName>
        <shortName evidence="1">SCS-beta</shortName>
    </alternativeName>
</protein>
<organism>
    <name type="scientific">Yersinia pseudotuberculosis serotype O:3 (strain YPIII)</name>
    <dbReference type="NCBI Taxonomy" id="502800"/>
    <lineage>
        <taxon>Bacteria</taxon>
        <taxon>Pseudomonadati</taxon>
        <taxon>Pseudomonadota</taxon>
        <taxon>Gammaproteobacteria</taxon>
        <taxon>Enterobacterales</taxon>
        <taxon>Yersiniaceae</taxon>
        <taxon>Yersinia</taxon>
    </lineage>
</organism>
<reference key="1">
    <citation type="submission" date="2008-02" db="EMBL/GenBank/DDBJ databases">
        <title>Complete sequence of Yersinia pseudotuberculosis YPIII.</title>
        <authorList>
            <consortium name="US DOE Joint Genome Institute"/>
            <person name="Copeland A."/>
            <person name="Lucas S."/>
            <person name="Lapidus A."/>
            <person name="Glavina del Rio T."/>
            <person name="Dalin E."/>
            <person name="Tice H."/>
            <person name="Bruce D."/>
            <person name="Goodwin L."/>
            <person name="Pitluck S."/>
            <person name="Munk A.C."/>
            <person name="Brettin T."/>
            <person name="Detter J.C."/>
            <person name="Han C."/>
            <person name="Tapia R."/>
            <person name="Schmutz J."/>
            <person name="Larimer F."/>
            <person name="Land M."/>
            <person name="Hauser L."/>
            <person name="Challacombe J.F."/>
            <person name="Green L."/>
            <person name="Lindler L.E."/>
            <person name="Nikolich M.P."/>
            <person name="Richardson P."/>
        </authorList>
    </citation>
    <scope>NUCLEOTIDE SEQUENCE [LARGE SCALE GENOMIC DNA]</scope>
    <source>
        <strain>YPIII</strain>
    </source>
</reference>
<keyword id="KW-0067">ATP-binding</keyword>
<keyword id="KW-0436">Ligase</keyword>
<keyword id="KW-0460">Magnesium</keyword>
<keyword id="KW-0479">Metal-binding</keyword>
<keyword id="KW-0547">Nucleotide-binding</keyword>
<keyword id="KW-0816">Tricarboxylic acid cycle</keyword>